<protein>
    <recommendedName>
        <fullName evidence="1">Orotidine 5'-phosphate decarboxylase</fullName>
        <ecNumber evidence="1">4.1.1.23</ecNumber>
    </recommendedName>
    <alternativeName>
        <fullName evidence="1">OMP decarboxylase</fullName>
        <shortName evidence="1">OMPDCase</shortName>
        <shortName evidence="1">OMPdecase</shortName>
    </alternativeName>
</protein>
<organism>
    <name type="scientific">Saccharophagus degradans (strain 2-40 / ATCC 43961 / DSM 17024)</name>
    <dbReference type="NCBI Taxonomy" id="203122"/>
    <lineage>
        <taxon>Bacteria</taxon>
        <taxon>Pseudomonadati</taxon>
        <taxon>Pseudomonadota</taxon>
        <taxon>Gammaproteobacteria</taxon>
        <taxon>Cellvibrionales</taxon>
        <taxon>Cellvibrionaceae</taxon>
        <taxon>Saccharophagus</taxon>
    </lineage>
</organism>
<dbReference type="EC" id="4.1.1.23" evidence="1"/>
<dbReference type="EMBL" id="CP000282">
    <property type="protein sequence ID" value="ABD81401.1"/>
    <property type="molecule type" value="Genomic_DNA"/>
</dbReference>
<dbReference type="RefSeq" id="WP_011468619.1">
    <property type="nucleotide sequence ID" value="NC_007912.1"/>
</dbReference>
<dbReference type="SMR" id="Q21IS8"/>
<dbReference type="STRING" id="203122.Sde_2141"/>
<dbReference type="GeneID" id="98613812"/>
<dbReference type="KEGG" id="sde:Sde_2141"/>
<dbReference type="eggNOG" id="COG0284">
    <property type="taxonomic scope" value="Bacteria"/>
</dbReference>
<dbReference type="HOGENOM" id="CLU_067069_0_0_6"/>
<dbReference type="OrthoDB" id="9806203at2"/>
<dbReference type="UniPathway" id="UPA00070">
    <property type="reaction ID" value="UER00120"/>
</dbReference>
<dbReference type="Proteomes" id="UP000001947">
    <property type="component" value="Chromosome"/>
</dbReference>
<dbReference type="GO" id="GO:0005829">
    <property type="term" value="C:cytosol"/>
    <property type="evidence" value="ECO:0007669"/>
    <property type="project" value="TreeGrafter"/>
</dbReference>
<dbReference type="GO" id="GO:0004590">
    <property type="term" value="F:orotidine-5'-phosphate decarboxylase activity"/>
    <property type="evidence" value="ECO:0007669"/>
    <property type="project" value="UniProtKB-UniRule"/>
</dbReference>
<dbReference type="GO" id="GO:0006207">
    <property type="term" value="P:'de novo' pyrimidine nucleobase biosynthetic process"/>
    <property type="evidence" value="ECO:0007669"/>
    <property type="project" value="InterPro"/>
</dbReference>
<dbReference type="GO" id="GO:0044205">
    <property type="term" value="P:'de novo' UMP biosynthetic process"/>
    <property type="evidence" value="ECO:0007669"/>
    <property type="project" value="UniProtKB-UniRule"/>
</dbReference>
<dbReference type="CDD" id="cd04725">
    <property type="entry name" value="OMP_decarboxylase_like"/>
    <property type="match status" value="1"/>
</dbReference>
<dbReference type="FunFam" id="3.20.20.70:FF:000015">
    <property type="entry name" value="Orotidine 5'-phosphate decarboxylase"/>
    <property type="match status" value="1"/>
</dbReference>
<dbReference type="Gene3D" id="3.20.20.70">
    <property type="entry name" value="Aldolase class I"/>
    <property type="match status" value="1"/>
</dbReference>
<dbReference type="HAMAP" id="MF_01200_B">
    <property type="entry name" value="OMPdecase_type1_B"/>
    <property type="match status" value="1"/>
</dbReference>
<dbReference type="InterPro" id="IPR013785">
    <property type="entry name" value="Aldolase_TIM"/>
</dbReference>
<dbReference type="InterPro" id="IPR014732">
    <property type="entry name" value="OMPdecase"/>
</dbReference>
<dbReference type="InterPro" id="IPR018089">
    <property type="entry name" value="OMPdecase_AS"/>
</dbReference>
<dbReference type="InterPro" id="IPR047596">
    <property type="entry name" value="OMPdecase_bac"/>
</dbReference>
<dbReference type="InterPro" id="IPR001754">
    <property type="entry name" value="OMPdeCOase_dom"/>
</dbReference>
<dbReference type="InterPro" id="IPR011060">
    <property type="entry name" value="RibuloseP-bd_barrel"/>
</dbReference>
<dbReference type="NCBIfam" id="NF001273">
    <property type="entry name" value="PRK00230.1"/>
    <property type="match status" value="1"/>
</dbReference>
<dbReference type="NCBIfam" id="NF010386">
    <property type="entry name" value="PRK13813.1"/>
    <property type="match status" value="1"/>
</dbReference>
<dbReference type="NCBIfam" id="TIGR01740">
    <property type="entry name" value="pyrF"/>
    <property type="match status" value="1"/>
</dbReference>
<dbReference type="PANTHER" id="PTHR32119">
    <property type="entry name" value="OROTIDINE 5'-PHOSPHATE DECARBOXYLASE"/>
    <property type="match status" value="1"/>
</dbReference>
<dbReference type="PANTHER" id="PTHR32119:SF2">
    <property type="entry name" value="OROTIDINE 5'-PHOSPHATE DECARBOXYLASE"/>
    <property type="match status" value="1"/>
</dbReference>
<dbReference type="Pfam" id="PF00215">
    <property type="entry name" value="OMPdecase"/>
    <property type="match status" value="1"/>
</dbReference>
<dbReference type="SMART" id="SM00934">
    <property type="entry name" value="OMPdecase"/>
    <property type="match status" value="1"/>
</dbReference>
<dbReference type="SUPFAM" id="SSF51366">
    <property type="entry name" value="Ribulose-phoshate binding barrel"/>
    <property type="match status" value="1"/>
</dbReference>
<dbReference type="PROSITE" id="PS00156">
    <property type="entry name" value="OMPDECASE"/>
    <property type="match status" value="1"/>
</dbReference>
<gene>
    <name evidence="1" type="primary">pyrF</name>
    <name type="ordered locus">Sde_2141</name>
</gene>
<feature type="chain" id="PRO_0000241902" description="Orotidine 5'-phosphate decarboxylase">
    <location>
        <begin position="1"/>
        <end position="238"/>
    </location>
</feature>
<feature type="active site" description="Proton donor" evidence="1">
    <location>
        <position position="64"/>
    </location>
</feature>
<feature type="binding site" evidence="1">
    <location>
        <position position="13"/>
    </location>
    <ligand>
        <name>substrate</name>
    </ligand>
</feature>
<feature type="binding site" evidence="1">
    <location>
        <position position="35"/>
    </location>
    <ligand>
        <name>substrate</name>
    </ligand>
</feature>
<feature type="binding site" evidence="1">
    <location>
        <begin position="62"/>
        <end position="71"/>
    </location>
    <ligand>
        <name>substrate</name>
    </ligand>
</feature>
<feature type="binding site" evidence="1">
    <location>
        <position position="121"/>
    </location>
    <ligand>
        <name>substrate</name>
    </ligand>
</feature>
<feature type="binding site" evidence="1">
    <location>
        <position position="182"/>
    </location>
    <ligand>
        <name>substrate</name>
    </ligand>
</feature>
<feature type="binding site" evidence="1">
    <location>
        <position position="191"/>
    </location>
    <ligand>
        <name>substrate</name>
    </ligand>
</feature>
<feature type="binding site" evidence="1">
    <location>
        <position position="211"/>
    </location>
    <ligand>
        <name>substrate</name>
    </ligand>
</feature>
<feature type="binding site" evidence="1">
    <location>
        <position position="212"/>
    </location>
    <ligand>
        <name>substrate</name>
    </ligand>
</feature>
<keyword id="KW-0210">Decarboxylase</keyword>
<keyword id="KW-0456">Lyase</keyword>
<keyword id="KW-0665">Pyrimidine biosynthesis</keyword>
<keyword id="KW-1185">Reference proteome</keyword>
<evidence type="ECO:0000255" key="1">
    <source>
        <dbReference type="HAMAP-Rule" id="MF_01200"/>
    </source>
</evidence>
<comment type="function">
    <text evidence="1">Catalyzes the decarboxylation of orotidine 5'-monophosphate (OMP) to uridine 5'-monophosphate (UMP).</text>
</comment>
<comment type="catalytic activity">
    <reaction evidence="1">
        <text>orotidine 5'-phosphate + H(+) = UMP + CO2</text>
        <dbReference type="Rhea" id="RHEA:11596"/>
        <dbReference type="ChEBI" id="CHEBI:15378"/>
        <dbReference type="ChEBI" id="CHEBI:16526"/>
        <dbReference type="ChEBI" id="CHEBI:57538"/>
        <dbReference type="ChEBI" id="CHEBI:57865"/>
        <dbReference type="EC" id="4.1.1.23"/>
    </reaction>
</comment>
<comment type="pathway">
    <text evidence="1">Pyrimidine metabolism; UMP biosynthesis via de novo pathway; UMP from orotate: step 2/2.</text>
</comment>
<comment type="subunit">
    <text evidence="1">Homodimer.</text>
</comment>
<comment type="similarity">
    <text evidence="1">Belongs to the OMP decarboxylase family. Type 1 subfamily.</text>
</comment>
<name>PYRF_SACD2</name>
<accession>Q21IS8</accession>
<proteinExistence type="inferred from homology"/>
<sequence length="238" mass="25724">MNIPDPQLVIALDFDTQESCLELVDQLDPTLCRLKIGKELFTSCGPKIVEKIQWKGFDVFLDLKFHDIPNTVAKAVKAAAELGVWMVNVHASGGEKMMLAAREALEGYQVKPLLIAVTVLTSMSDEDLKALGITVTAAEQVQRLAALAKQAQMDGVVCSAQEVVQLKASLGEEFKMITPGIRPSFAGNDDQTRIMTPEQALKAGSDYLVVGRPVTQADDPLRALEQIAAEMARASLGS</sequence>
<reference key="1">
    <citation type="journal article" date="2008" name="PLoS Genet.">
        <title>Complete genome sequence of the complex carbohydrate-degrading marine bacterium, Saccharophagus degradans strain 2-40 T.</title>
        <authorList>
            <person name="Weiner R.M."/>
            <person name="Taylor L.E. II"/>
            <person name="Henrissat B."/>
            <person name="Hauser L."/>
            <person name="Land M."/>
            <person name="Coutinho P.M."/>
            <person name="Rancurel C."/>
            <person name="Saunders E.H."/>
            <person name="Longmire A.G."/>
            <person name="Zhang H."/>
            <person name="Bayer E.A."/>
            <person name="Gilbert H.J."/>
            <person name="Larimer F."/>
            <person name="Zhulin I.B."/>
            <person name="Ekborg N.A."/>
            <person name="Lamed R."/>
            <person name="Richardson P.M."/>
            <person name="Borovok I."/>
            <person name="Hutcheson S."/>
        </authorList>
    </citation>
    <scope>NUCLEOTIDE SEQUENCE [LARGE SCALE GENOMIC DNA]</scope>
    <source>
        <strain>2-40 / ATCC 43961 / DSM 17024</strain>
    </source>
</reference>